<proteinExistence type="inferred from homology"/>
<protein>
    <recommendedName>
        <fullName>Ubiquitin-fold modifier 1</fullName>
    </recommendedName>
</protein>
<comment type="function">
    <text evidence="1">Ubiquitin-like modifier protein which binds to a number of as yet unidentified target proteins.</text>
</comment>
<comment type="similarity">
    <text evidence="3">Belongs to the UFM1 family.</text>
</comment>
<gene>
    <name type="ORF">AAEL006251</name>
</gene>
<accession>Q176V0</accession>
<keyword id="KW-1017">Isopeptide bond</keyword>
<keyword id="KW-1185">Reference proteome</keyword>
<keyword id="KW-0833">Ubl conjugation pathway</keyword>
<reference key="1">
    <citation type="journal article" date="2007" name="Science">
        <title>Genome sequence of Aedes aegypti, a major arbovirus vector.</title>
        <authorList>
            <person name="Nene V."/>
            <person name="Wortman J.R."/>
            <person name="Lawson D."/>
            <person name="Haas B.J."/>
            <person name="Kodira C.D."/>
            <person name="Tu Z.J."/>
            <person name="Loftus B.J."/>
            <person name="Xi Z."/>
            <person name="Megy K."/>
            <person name="Grabherr M."/>
            <person name="Ren Q."/>
            <person name="Zdobnov E.M."/>
            <person name="Lobo N.F."/>
            <person name="Campbell K.S."/>
            <person name="Brown S.E."/>
            <person name="Bonaldo M.F."/>
            <person name="Zhu J."/>
            <person name="Sinkins S.P."/>
            <person name="Hogenkamp D.G."/>
            <person name="Amedeo P."/>
            <person name="Arensburger P."/>
            <person name="Atkinson P.W."/>
            <person name="Bidwell S.L."/>
            <person name="Biedler J."/>
            <person name="Birney E."/>
            <person name="Bruggner R.V."/>
            <person name="Costas J."/>
            <person name="Coy M.R."/>
            <person name="Crabtree J."/>
            <person name="Crawford M."/>
            <person name="DeBruyn B."/>
            <person name="DeCaprio D."/>
            <person name="Eiglmeier K."/>
            <person name="Eisenstadt E."/>
            <person name="El-Dorry H."/>
            <person name="Gelbart W.M."/>
            <person name="Gomes S.L."/>
            <person name="Hammond M."/>
            <person name="Hannick L.I."/>
            <person name="Hogan J.R."/>
            <person name="Holmes M.H."/>
            <person name="Jaffe D."/>
            <person name="Johnston S.J."/>
            <person name="Kennedy R.C."/>
            <person name="Koo H."/>
            <person name="Kravitz S."/>
            <person name="Kriventseva E.V."/>
            <person name="Kulp D."/>
            <person name="Labutti K."/>
            <person name="Lee E."/>
            <person name="Li S."/>
            <person name="Lovin D.D."/>
            <person name="Mao C."/>
            <person name="Mauceli E."/>
            <person name="Menck C.F."/>
            <person name="Miller J.R."/>
            <person name="Montgomery P."/>
            <person name="Mori A."/>
            <person name="Nascimento A.L."/>
            <person name="Naveira H.F."/>
            <person name="Nusbaum C."/>
            <person name="O'Leary S.B."/>
            <person name="Orvis J."/>
            <person name="Pertea M."/>
            <person name="Quesneville H."/>
            <person name="Reidenbach K.R."/>
            <person name="Rogers Y.-H.C."/>
            <person name="Roth C.W."/>
            <person name="Schneider J.R."/>
            <person name="Schatz M."/>
            <person name="Shumway M."/>
            <person name="Stanke M."/>
            <person name="Stinson E.O."/>
            <person name="Tubio J.M.C."/>
            <person name="Vanzee J.P."/>
            <person name="Verjovski-Almeida S."/>
            <person name="Werner D."/>
            <person name="White O.R."/>
            <person name="Wyder S."/>
            <person name="Zeng Q."/>
            <person name="Zhao Q."/>
            <person name="Zhao Y."/>
            <person name="Hill C.A."/>
            <person name="Raikhel A.S."/>
            <person name="Soares M.B."/>
            <person name="Knudson D.L."/>
            <person name="Lee N.H."/>
            <person name="Galagan J."/>
            <person name="Salzberg S.L."/>
            <person name="Paulsen I.T."/>
            <person name="Dimopoulos G."/>
            <person name="Collins F.H."/>
            <person name="Bruce B."/>
            <person name="Fraser-Liggett C.M."/>
            <person name="Severson D.W."/>
        </authorList>
    </citation>
    <scope>NUCLEOTIDE SEQUENCE [LARGE SCALE GENOMIC DNA]</scope>
    <source>
        <strain>LVPib12</strain>
    </source>
</reference>
<dbReference type="EMBL" id="CH477382">
    <property type="protein sequence ID" value="EAT42186.1"/>
    <property type="molecule type" value="Genomic_DNA"/>
</dbReference>
<dbReference type="SMR" id="Q176V0"/>
<dbReference type="FunCoup" id="Q176V0">
    <property type="interactions" value="992"/>
</dbReference>
<dbReference type="STRING" id="7159.Q176V0"/>
<dbReference type="PaxDb" id="7159-AAEL006251-PA"/>
<dbReference type="EnsemblMetazoa" id="AAEL006251-RA">
    <property type="protein sequence ID" value="AAEL006251-PA"/>
    <property type="gene ID" value="AAEL006251"/>
</dbReference>
<dbReference type="GeneID" id="5567684"/>
<dbReference type="KEGG" id="aag:5567684"/>
<dbReference type="CTD" id="51569"/>
<dbReference type="VEuPathDB" id="VectorBase:AAEL006251"/>
<dbReference type="eggNOG" id="KOG3483">
    <property type="taxonomic scope" value="Eukaryota"/>
</dbReference>
<dbReference type="HOGENOM" id="CLU_175114_0_0_1"/>
<dbReference type="InParanoid" id="Q176V0"/>
<dbReference type="OMA" id="MEHAVGK"/>
<dbReference type="OrthoDB" id="284357at2759"/>
<dbReference type="PhylomeDB" id="Q176V0"/>
<dbReference type="Proteomes" id="UP000008820">
    <property type="component" value="Chromosome 3"/>
</dbReference>
<dbReference type="Proteomes" id="UP000682892">
    <property type="component" value="Chromosome 3"/>
</dbReference>
<dbReference type="GO" id="GO:0005737">
    <property type="term" value="C:cytoplasm"/>
    <property type="evidence" value="ECO:0007669"/>
    <property type="project" value="TreeGrafter"/>
</dbReference>
<dbReference type="GO" id="GO:0005634">
    <property type="term" value="C:nucleus"/>
    <property type="evidence" value="ECO:0007669"/>
    <property type="project" value="TreeGrafter"/>
</dbReference>
<dbReference type="GO" id="GO:1990592">
    <property type="term" value="P:protein K69-linked ufmylation"/>
    <property type="evidence" value="ECO:0007669"/>
    <property type="project" value="TreeGrafter"/>
</dbReference>
<dbReference type="CDD" id="cd01766">
    <property type="entry name" value="Ubl_UFM1"/>
    <property type="match status" value="1"/>
</dbReference>
<dbReference type="FunFam" id="3.10.20.90:FF:000044">
    <property type="entry name" value="Ubiquitin-fold modifier 1"/>
    <property type="match status" value="1"/>
</dbReference>
<dbReference type="Gene3D" id="3.10.20.90">
    <property type="entry name" value="Phosphatidylinositol 3-kinase Catalytic Subunit, Chain A, domain 1"/>
    <property type="match status" value="1"/>
</dbReference>
<dbReference type="InterPro" id="IPR029071">
    <property type="entry name" value="Ubiquitin-like_domsf"/>
</dbReference>
<dbReference type="InterPro" id="IPR005375">
    <property type="entry name" value="UFM1"/>
</dbReference>
<dbReference type="PANTHER" id="PTHR15825">
    <property type="entry name" value="UBIQUITIN-FOLD MODIFIER 1"/>
    <property type="match status" value="1"/>
</dbReference>
<dbReference type="PANTHER" id="PTHR15825:SF0">
    <property type="entry name" value="UBIQUITIN-FOLD MODIFIER 1"/>
    <property type="match status" value="1"/>
</dbReference>
<dbReference type="Pfam" id="PF03671">
    <property type="entry name" value="Ufm1"/>
    <property type="match status" value="1"/>
</dbReference>
<dbReference type="PIRSF" id="PIRSF038027">
    <property type="entry name" value="Ubiquitin-like_Ufm1"/>
    <property type="match status" value="1"/>
</dbReference>
<dbReference type="SUPFAM" id="SSF54236">
    <property type="entry name" value="Ubiquitin-like"/>
    <property type="match status" value="1"/>
</dbReference>
<name>UFM1_AEDAE</name>
<organism>
    <name type="scientific">Aedes aegypti</name>
    <name type="common">Yellowfever mosquito</name>
    <name type="synonym">Culex aegypti</name>
    <dbReference type="NCBI Taxonomy" id="7159"/>
    <lineage>
        <taxon>Eukaryota</taxon>
        <taxon>Metazoa</taxon>
        <taxon>Ecdysozoa</taxon>
        <taxon>Arthropoda</taxon>
        <taxon>Hexapoda</taxon>
        <taxon>Insecta</taxon>
        <taxon>Pterygota</taxon>
        <taxon>Neoptera</taxon>
        <taxon>Endopterygota</taxon>
        <taxon>Diptera</taxon>
        <taxon>Nematocera</taxon>
        <taxon>Culicoidea</taxon>
        <taxon>Culicidae</taxon>
        <taxon>Culicinae</taxon>
        <taxon>Aedini</taxon>
        <taxon>Aedes</taxon>
        <taxon>Stegomyia</taxon>
    </lineage>
</organism>
<evidence type="ECO:0000250" key="1"/>
<evidence type="ECO:0000255" key="2"/>
<evidence type="ECO:0000305" key="3"/>
<feature type="chain" id="PRO_0000391991" description="Ubiquitin-fold modifier 1">
    <location>
        <begin position="1"/>
        <end position="84"/>
    </location>
</feature>
<feature type="propeptide" id="PRO_0000391992" description="Removed in mature form" evidence="1">
    <location>
        <begin position="85"/>
        <end position="86"/>
    </location>
</feature>
<feature type="cross-link" description="Glycyl lysine isopeptide (Gly-Lys) (interchain with K-? in acceptor proteins)" evidence="2">
    <location>
        <position position="84"/>
    </location>
</feature>
<sequence length="86" mass="9261">MASKVTFKITLTSDPKLPFKVLSVPEATPFTAVLKFAAEEFKVPPATSAIITDDGIGINPQQTAGNVFLKHGSELRLIPRDRVGSH</sequence>